<gene>
    <name type="primary">CPK31</name>
    <name type="ordered locus">At4g04695</name>
    <name type="ORF">T19J18.7</name>
</gene>
<evidence type="ECO:0000250" key="1"/>
<evidence type="ECO:0000250" key="2">
    <source>
        <dbReference type="UniProtKB" id="Q9FKW4"/>
    </source>
</evidence>
<evidence type="ECO:0000255" key="3"/>
<evidence type="ECO:0000255" key="4">
    <source>
        <dbReference type="PROSITE-ProRule" id="PRU00159"/>
    </source>
</evidence>
<evidence type="ECO:0000255" key="5">
    <source>
        <dbReference type="PROSITE-ProRule" id="PRU00448"/>
    </source>
</evidence>
<evidence type="ECO:0000269" key="6">
    <source>
    </source>
</evidence>
<evidence type="ECO:0000305" key="7"/>
<dbReference type="EC" id="2.7.11.1"/>
<dbReference type="EMBL" id="AF149414">
    <property type="protein sequence ID" value="AAD48958.1"/>
    <property type="status" value="ALT_SEQ"/>
    <property type="molecule type" value="Genomic_DNA"/>
</dbReference>
<dbReference type="EMBL" id="AL161501">
    <property type="status" value="NOT_ANNOTATED_CDS"/>
    <property type="molecule type" value="Genomic_DNA"/>
</dbReference>
<dbReference type="EMBL" id="CP002687">
    <property type="protein sequence ID" value="AEE82413.1"/>
    <property type="molecule type" value="Genomic_DNA"/>
</dbReference>
<dbReference type="RefSeq" id="NP_680596.2">
    <property type="nucleotide sequence ID" value="NM_148230.3"/>
</dbReference>
<dbReference type="SMR" id="Q9S9V0"/>
<dbReference type="FunCoup" id="Q9S9V0">
    <property type="interactions" value="761"/>
</dbReference>
<dbReference type="STRING" id="3702.Q9S9V0"/>
<dbReference type="iPTMnet" id="Q9S9V0"/>
<dbReference type="SwissPalm" id="Q9S9V0"/>
<dbReference type="PaxDb" id="3702-AT4G04695.1"/>
<dbReference type="ProteomicsDB" id="224456"/>
<dbReference type="EnsemblPlants" id="AT4G04695.1">
    <property type="protein sequence ID" value="AT4G04695.1"/>
    <property type="gene ID" value="AT4G04695"/>
</dbReference>
<dbReference type="GeneID" id="825804"/>
<dbReference type="Gramene" id="AT4G04695.1">
    <property type="protein sequence ID" value="AT4G04695.1"/>
    <property type="gene ID" value="AT4G04695"/>
</dbReference>
<dbReference type="KEGG" id="ath:AT4G04695"/>
<dbReference type="Araport" id="AT4G04695"/>
<dbReference type="TAIR" id="AT4G04695">
    <property type="gene designation" value="CPK31"/>
</dbReference>
<dbReference type="eggNOG" id="KOG0032">
    <property type="taxonomic scope" value="Eukaryota"/>
</dbReference>
<dbReference type="HOGENOM" id="CLU_000288_37_3_1"/>
<dbReference type="InParanoid" id="Q9S9V0"/>
<dbReference type="OMA" id="EIRIMKH"/>
<dbReference type="PhylomeDB" id="Q9S9V0"/>
<dbReference type="PRO" id="PR:Q9S9V0"/>
<dbReference type="Proteomes" id="UP000006548">
    <property type="component" value="Chromosome 4"/>
</dbReference>
<dbReference type="ExpressionAtlas" id="Q9S9V0">
    <property type="expression patterns" value="baseline and differential"/>
</dbReference>
<dbReference type="GO" id="GO:0016020">
    <property type="term" value="C:membrane"/>
    <property type="evidence" value="ECO:0007669"/>
    <property type="project" value="UniProtKB-SubCell"/>
</dbReference>
<dbReference type="GO" id="GO:0005524">
    <property type="term" value="F:ATP binding"/>
    <property type="evidence" value="ECO:0007669"/>
    <property type="project" value="UniProtKB-KW"/>
</dbReference>
<dbReference type="GO" id="GO:0005509">
    <property type="term" value="F:calcium ion binding"/>
    <property type="evidence" value="ECO:0007669"/>
    <property type="project" value="InterPro"/>
</dbReference>
<dbReference type="GO" id="GO:0106310">
    <property type="term" value="F:protein serine kinase activity"/>
    <property type="evidence" value="ECO:0007669"/>
    <property type="project" value="RHEA"/>
</dbReference>
<dbReference type="GO" id="GO:0004674">
    <property type="term" value="F:protein serine/threonine kinase activity"/>
    <property type="evidence" value="ECO:0007669"/>
    <property type="project" value="UniProtKB-KW"/>
</dbReference>
<dbReference type="GO" id="GO:0009617">
    <property type="term" value="P:response to bacterium"/>
    <property type="evidence" value="ECO:0000270"/>
    <property type="project" value="TAIR"/>
</dbReference>
<dbReference type="GO" id="GO:0051592">
    <property type="term" value="P:response to calcium ion"/>
    <property type="evidence" value="ECO:0000270"/>
    <property type="project" value="TAIR"/>
</dbReference>
<dbReference type="GO" id="GO:0009751">
    <property type="term" value="P:response to salicylic acid"/>
    <property type="evidence" value="ECO:0000270"/>
    <property type="project" value="TAIR"/>
</dbReference>
<dbReference type="CDD" id="cd05117">
    <property type="entry name" value="STKc_CAMK"/>
    <property type="match status" value="1"/>
</dbReference>
<dbReference type="FunFam" id="1.10.238.10:FF:000015">
    <property type="entry name" value="Calcium-dependent protein kinase 1"/>
    <property type="match status" value="1"/>
</dbReference>
<dbReference type="FunFam" id="1.10.510.10:FF:001411">
    <property type="entry name" value="Calcium-dependent protein kinase 27"/>
    <property type="match status" value="1"/>
</dbReference>
<dbReference type="FunFam" id="3.30.200.20:FF:001210">
    <property type="entry name" value="Calcium-dependent protein kinase 31"/>
    <property type="match status" value="1"/>
</dbReference>
<dbReference type="Gene3D" id="1.10.238.10">
    <property type="entry name" value="EF-hand"/>
    <property type="match status" value="1"/>
</dbReference>
<dbReference type="Gene3D" id="3.30.200.20">
    <property type="entry name" value="Phosphorylase Kinase, domain 1"/>
    <property type="match status" value="1"/>
</dbReference>
<dbReference type="Gene3D" id="1.10.510.10">
    <property type="entry name" value="Transferase(Phosphotransferase) domain 1"/>
    <property type="match status" value="1"/>
</dbReference>
<dbReference type="InterPro" id="IPR050205">
    <property type="entry name" value="CDPK_Ser/Thr_kinases"/>
</dbReference>
<dbReference type="InterPro" id="IPR011992">
    <property type="entry name" value="EF-hand-dom_pair"/>
</dbReference>
<dbReference type="InterPro" id="IPR018247">
    <property type="entry name" value="EF_Hand_1_Ca_BS"/>
</dbReference>
<dbReference type="InterPro" id="IPR002048">
    <property type="entry name" value="EF_hand_dom"/>
</dbReference>
<dbReference type="InterPro" id="IPR011009">
    <property type="entry name" value="Kinase-like_dom_sf"/>
</dbReference>
<dbReference type="InterPro" id="IPR000719">
    <property type="entry name" value="Prot_kinase_dom"/>
</dbReference>
<dbReference type="InterPro" id="IPR017441">
    <property type="entry name" value="Protein_kinase_ATP_BS"/>
</dbReference>
<dbReference type="PANTHER" id="PTHR24349">
    <property type="entry name" value="SERINE/THREONINE-PROTEIN KINASE"/>
    <property type="match status" value="1"/>
</dbReference>
<dbReference type="Pfam" id="PF13499">
    <property type="entry name" value="EF-hand_7"/>
    <property type="match status" value="2"/>
</dbReference>
<dbReference type="Pfam" id="PF00069">
    <property type="entry name" value="Pkinase"/>
    <property type="match status" value="1"/>
</dbReference>
<dbReference type="SMART" id="SM00054">
    <property type="entry name" value="EFh"/>
    <property type="match status" value="4"/>
</dbReference>
<dbReference type="SMART" id="SM00220">
    <property type="entry name" value="S_TKc"/>
    <property type="match status" value="1"/>
</dbReference>
<dbReference type="SUPFAM" id="SSF47473">
    <property type="entry name" value="EF-hand"/>
    <property type="match status" value="1"/>
</dbReference>
<dbReference type="SUPFAM" id="SSF56112">
    <property type="entry name" value="Protein kinase-like (PK-like)"/>
    <property type="match status" value="1"/>
</dbReference>
<dbReference type="PROSITE" id="PS00018">
    <property type="entry name" value="EF_HAND_1"/>
    <property type="match status" value="4"/>
</dbReference>
<dbReference type="PROSITE" id="PS50222">
    <property type="entry name" value="EF_HAND_2"/>
    <property type="match status" value="4"/>
</dbReference>
<dbReference type="PROSITE" id="PS00107">
    <property type="entry name" value="PROTEIN_KINASE_ATP"/>
    <property type="match status" value="1"/>
</dbReference>
<dbReference type="PROSITE" id="PS50011">
    <property type="entry name" value="PROTEIN_KINASE_DOM"/>
    <property type="match status" value="1"/>
</dbReference>
<reference key="1">
    <citation type="journal article" date="1999" name="Nature">
        <title>Sequence and analysis of chromosome 4 of the plant Arabidopsis thaliana.</title>
        <authorList>
            <person name="Mayer K.F.X."/>
            <person name="Schueller C."/>
            <person name="Wambutt R."/>
            <person name="Murphy G."/>
            <person name="Volckaert G."/>
            <person name="Pohl T."/>
            <person name="Duesterhoeft A."/>
            <person name="Stiekema W."/>
            <person name="Entian K.-D."/>
            <person name="Terryn N."/>
            <person name="Harris B."/>
            <person name="Ansorge W."/>
            <person name="Brandt P."/>
            <person name="Grivell L.A."/>
            <person name="Rieger M."/>
            <person name="Weichselgartner M."/>
            <person name="de Simone V."/>
            <person name="Obermaier B."/>
            <person name="Mache R."/>
            <person name="Mueller M."/>
            <person name="Kreis M."/>
            <person name="Delseny M."/>
            <person name="Puigdomenech P."/>
            <person name="Watson M."/>
            <person name="Schmidtheini T."/>
            <person name="Reichert B."/>
            <person name="Portetelle D."/>
            <person name="Perez-Alonso M."/>
            <person name="Boutry M."/>
            <person name="Bancroft I."/>
            <person name="Vos P."/>
            <person name="Hoheisel J."/>
            <person name="Zimmermann W."/>
            <person name="Wedler H."/>
            <person name="Ridley P."/>
            <person name="Langham S.-A."/>
            <person name="McCullagh B."/>
            <person name="Bilham L."/>
            <person name="Robben J."/>
            <person name="van der Schueren J."/>
            <person name="Grymonprez B."/>
            <person name="Chuang Y.-J."/>
            <person name="Vandenbussche F."/>
            <person name="Braeken M."/>
            <person name="Weltjens I."/>
            <person name="Voet M."/>
            <person name="Bastiaens I."/>
            <person name="Aert R."/>
            <person name="Defoor E."/>
            <person name="Weitzenegger T."/>
            <person name="Bothe G."/>
            <person name="Ramsperger U."/>
            <person name="Hilbert H."/>
            <person name="Braun M."/>
            <person name="Holzer E."/>
            <person name="Brandt A."/>
            <person name="Peters S."/>
            <person name="van Staveren M."/>
            <person name="Dirkse W."/>
            <person name="Mooijman P."/>
            <person name="Klein Lankhorst R."/>
            <person name="Rose M."/>
            <person name="Hauf J."/>
            <person name="Koetter P."/>
            <person name="Berneiser S."/>
            <person name="Hempel S."/>
            <person name="Feldpausch M."/>
            <person name="Lamberth S."/>
            <person name="Van den Daele H."/>
            <person name="De Keyser A."/>
            <person name="Buysshaert C."/>
            <person name="Gielen J."/>
            <person name="Villarroel R."/>
            <person name="De Clercq R."/>
            <person name="van Montagu M."/>
            <person name="Rogers J."/>
            <person name="Cronin A."/>
            <person name="Quail M.A."/>
            <person name="Bray-Allen S."/>
            <person name="Clark L."/>
            <person name="Doggett J."/>
            <person name="Hall S."/>
            <person name="Kay M."/>
            <person name="Lennard N."/>
            <person name="McLay K."/>
            <person name="Mayes R."/>
            <person name="Pettett A."/>
            <person name="Rajandream M.A."/>
            <person name="Lyne M."/>
            <person name="Benes V."/>
            <person name="Rechmann S."/>
            <person name="Borkova D."/>
            <person name="Bloecker H."/>
            <person name="Scharfe M."/>
            <person name="Grimm M."/>
            <person name="Loehnert T.-H."/>
            <person name="Dose S."/>
            <person name="de Haan M."/>
            <person name="Maarse A.C."/>
            <person name="Schaefer M."/>
            <person name="Mueller-Auer S."/>
            <person name="Gabel C."/>
            <person name="Fuchs M."/>
            <person name="Fartmann B."/>
            <person name="Granderath K."/>
            <person name="Dauner D."/>
            <person name="Herzl A."/>
            <person name="Neumann S."/>
            <person name="Argiriou A."/>
            <person name="Vitale D."/>
            <person name="Liguori R."/>
            <person name="Piravandi E."/>
            <person name="Massenet O."/>
            <person name="Quigley F."/>
            <person name="Clabauld G."/>
            <person name="Muendlein A."/>
            <person name="Felber R."/>
            <person name="Schnabl S."/>
            <person name="Hiller R."/>
            <person name="Schmidt W."/>
            <person name="Lecharny A."/>
            <person name="Aubourg S."/>
            <person name="Chefdor F."/>
            <person name="Cooke R."/>
            <person name="Berger C."/>
            <person name="Monfort A."/>
            <person name="Casacuberta E."/>
            <person name="Gibbons T."/>
            <person name="Weber N."/>
            <person name="Vandenbol M."/>
            <person name="Bargues M."/>
            <person name="Terol J."/>
            <person name="Torres A."/>
            <person name="Perez-Perez A."/>
            <person name="Purnelle B."/>
            <person name="Bent E."/>
            <person name="Johnson S."/>
            <person name="Tacon D."/>
            <person name="Jesse T."/>
            <person name="Heijnen L."/>
            <person name="Schwarz S."/>
            <person name="Scholler P."/>
            <person name="Heber S."/>
            <person name="Francs P."/>
            <person name="Bielke C."/>
            <person name="Frishman D."/>
            <person name="Haase D."/>
            <person name="Lemcke K."/>
            <person name="Mewes H.-W."/>
            <person name="Stocker S."/>
            <person name="Zaccaria P."/>
            <person name="Bevan M."/>
            <person name="Wilson R.K."/>
            <person name="de la Bastide M."/>
            <person name="Habermann K."/>
            <person name="Parnell L."/>
            <person name="Dedhia N."/>
            <person name="Gnoj L."/>
            <person name="Schutz K."/>
            <person name="Huang E."/>
            <person name="Spiegel L."/>
            <person name="Sekhon M."/>
            <person name="Murray J."/>
            <person name="Sheet P."/>
            <person name="Cordes M."/>
            <person name="Abu-Threideh J."/>
            <person name="Stoneking T."/>
            <person name="Kalicki J."/>
            <person name="Graves T."/>
            <person name="Harmon G."/>
            <person name="Edwards J."/>
            <person name="Latreille P."/>
            <person name="Courtney L."/>
            <person name="Cloud J."/>
            <person name="Abbott A."/>
            <person name="Scott K."/>
            <person name="Johnson D."/>
            <person name="Minx P."/>
            <person name="Bentley D."/>
            <person name="Fulton B."/>
            <person name="Miller N."/>
            <person name="Greco T."/>
            <person name="Kemp K."/>
            <person name="Kramer J."/>
            <person name="Fulton L."/>
            <person name="Mardis E."/>
            <person name="Dante M."/>
            <person name="Pepin K."/>
            <person name="Hillier L.W."/>
            <person name="Nelson J."/>
            <person name="Spieth J."/>
            <person name="Ryan E."/>
            <person name="Andrews S."/>
            <person name="Geisel C."/>
            <person name="Layman D."/>
            <person name="Du H."/>
            <person name="Ali J."/>
            <person name="Berghoff A."/>
            <person name="Jones K."/>
            <person name="Drone K."/>
            <person name="Cotton M."/>
            <person name="Joshu C."/>
            <person name="Antonoiu B."/>
            <person name="Zidanic M."/>
            <person name="Strong C."/>
            <person name="Sun H."/>
            <person name="Lamar B."/>
            <person name="Yordan C."/>
            <person name="Ma P."/>
            <person name="Zhong J."/>
            <person name="Preston R."/>
            <person name="Vil D."/>
            <person name="Shekher M."/>
            <person name="Matero A."/>
            <person name="Shah R."/>
            <person name="Swaby I.K."/>
            <person name="O'Shaughnessy A."/>
            <person name="Rodriguez M."/>
            <person name="Hoffman J."/>
            <person name="Till S."/>
            <person name="Granat S."/>
            <person name="Shohdy N."/>
            <person name="Hasegawa A."/>
            <person name="Hameed A."/>
            <person name="Lodhi M."/>
            <person name="Johnson A."/>
            <person name="Chen E."/>
            <person name="Marra M.A."/>
            <person name="Martienssen R."/>
            <person name="McCombie W.R."/>
        </authorList>
    </citation>
    <scope>NUCLEOTIDE SEQUENCE [LARGE SCALE GENOMIC DNA]</scope>
    <source>
        <strain>cv. Columbia</strain>
    </source>
</reference>
<reference key="2">
    <citation type="journal article" date="2017" name="Plant J.">
        <title>Araport11: a complete reannotation of the Arabidopsis thaliana reference genome.</title>
        <authorList>
            <person name="Cheng C.Y."/>
            <person name="Krishnakumar V."/>
            <person name="Chan A.P."/>
            <person name="Thibaud-Nissen F."/>
            <person name="Schobel S."/>
            <person name="Town C.D."/>
        </authorList>
    </citation>
    <scope>GENOME REANNOTATION</scope>
    <source>
        <strain>cv. Columbia</strain>
    </source>
</reference>
<reference key="3">
    <citation type="journal article" date="2001" name="New Phytol.">
        <title>The CDPK superfamily of protein kinases.</title>
        <authorList>
            <person name="Harmon A.C."/>
            <person name="Gribskov M."/>
            <person name="Gubrium E."/>
            <person name="Harper J.F."/>
        </authorList>
    </citation>
    <scope>GENE FAMILY</scope>
    <scope>NOMENCLATURE</scope>
</reference>
<reference key="4">
    <citation type="journal article" date="2002" name="Plant Physiol.">
        <title>Calcium signaling through protein kinases. The Arabidopsis calcium-dependent protein kinase gene family.</title>
        <authorList>
            <person name="Cheng S.-H."/>
            <person name="Willmann M.R."/>
            <person name="Chen H.-C."/>
            <person name="Sheen J."/>
        </authorList>
    </citation>
    <scope>GENE FAMILY</scope>
    <scope>NOMENCLATURE</scope>
</reference>
<reference key="5">
    <citation type="journal article" date="2003" name="Plant Physiol.">
        <title>The Arabidopsis CDPK-SnRK superfamily of protein kinases.</title>
        <authorList>
            <person name="Hrabak E.M."/>
            <person name="Chan C.W.M."/>
            <person name="Gribskov M."/>
            <person name="Harper J.F."/>
            <person name="Choi J.H."/>
            <person name="Halford N."/>
            <person name="Kudla J."/>
            <person name="Luan S."/>
            <person name="Nimmo H.G."/>
            <person name="Sussman M.R."/>
            <person name="Thomas M."/>
            <person name="Walker-Simmons K."/>
            <person name="Zhu J.-K."/>
            <person name="Harmon A.C."/>
        </authorList>
    </citation>
    <scope>GENE FAMILY</scope>
    <scope>NOMENCLATURE</scope>
</reference>
<reference key="6">
    <citation type="journal article" date="2005" name="Plant Mol. Biol.">
        <title>Identification of NPR1-dependent and independent genes early induced by salicylic acid treatment in Arabidopsis.</title>
        <authorList>
            <person name="Blanco F."/>
            <person name="Garreton V."/>
            <person name="Frey N."/>
            <person name="Dominguez C."/>
            <person name="Perez-Acle T."/>
            <person name="van der Straeten D."/>
            <person name="Jordana X."/>
            <person name="Holuigue L."/>
        </authorList>
    </citation>
    <scope>INDUCTION BY SA</scope>
</reference>
<organism>
    <name type="scientific">Arabidopsis thaliana</name>
    <name type="common">Mouse-ear cress</name>
    <dbReference type="NCBI Taxonomy" id="3702"/>
    <lineage>
        <taxon>Eukaryota</taxon>
        <taxon>Viridiplantae</taxon>
        <taxon>Streptophyta</taxon>
        <taxon>Embryophyta</taxon>
        <taxon>Tracheophyta</taxon>
        <taxon>Spermatophyta</taxon>
        <taxon>Magnoliopsida</taxon>
        <taxon>eudicotyledons</taxon>
        <taxon>Gunneridae</taxon>
        <taxon>Pentapetalae</taxon>
        <taxon>rosids</taxon>
        <taxon>malvids</taxon>
        <taxon>Brassicales</taxon>
        <taxon>Brassicaceae</taxon>
        <taxon>Camelineae</taxon>
        <taxon>Arabidopsis</taxon>
    </lineage>
</organism>
<comment type="function">
    <text>May play a role in signal transduction pathways that involve calcium as a second messenger.</text>
</comment>
<comment type="catalytic activity">
    <reaction>
        <text>L-seryl-[protein] + ATP = O-phospho-L-seryl-[protein] + ADP + H(+)</text>
        <dbReference type="Rhea" id="RHEA:17989"/>
        <dbReference type="Rhea" id="RHEA-COMP:9863"/>
        <dbReference type="Rhea" id="RHEA-COMP:11604"/>
        <dbReference type="ChEBI" id="CHEBI:15378"/>
        <dbReference type="ChEBI" id="CHEBI:29999"/>
        <dbReference type="ChEBI" id="CHEBI:30616"/>
        <dbReference type="ChEBI" id="CHEBI:83421"/>
        <dbReference type="ChEBI" id="CHEBI:456216"/>
        <dbReference type="EC" id="2.7.11.1"/>
    </reaction>
</comment>
<comment type="catalytic activity">
    <reaction>
        <text>L-threonyl-[protein] + ATP = O-phospho-L-threonyl-[protein] + ADP + H(+)</text>
        <dbReference type="Rhea" id="RHEA:46608"/>
        <dbReference type="Rhea" id="RHEA-COMP:11060"/>
        <dbReference type="Rhea" id="RHEA-COMP:11605"/>
        <dbReference type="ChEBI" id="CHEBI:15378"/>
        <dbReference type="ChEBI" id="CHEBI:30013"/>
        <dbReference type="ChEBI" id="CHEBI:30616"/>
        <dbReference type="ChEBI" id="CHEBI:61977"/>
        <dbReference type="ChEBI" id="CHEBI:456216"/>
        <dbReference type="EC" id="2.7.11.1"/>
    </reaction>
</comment>
<comment type="activity regulation">
    <text evidence="1">Activated by calcium. Autophosphorylation may play an important role in the regulation of the kinase activity (By similarity).</text>
</comment>
<comment type="subcellular location">
    <subcellularLocation>
        <location evidence="7">Membrane</location>
        <topology evidence="7">Lipid-anchor</topology>
    </subcellularLocation>
</comment>
<comment type="induction">
    <text evidence="6">Early induced by salicylic acid (SA) treatment.</text>
</comment>
<comment type="domain">
    <text evidence="1">There are 3 contiguous domains conserved in the CDPK subfamily: a kinase domain, an autoinhibitory (junction) domain and a calmodulin-like domain. The autoinhibitory domain (295-325) inactivates kinase activity under calcium-free conditions (By similarity).</text>
</comment>
<comment type="similarity">
    <text evidence="4">Belongs to the protein kinase superfamily. Ser/Thr protein kinase family. CDPK subfamily.</text>
</comment>
<comment type="sequence caution" evidence="7">
    <conflict type="erroneous gene model prediction">
        <sequence resource="EMBL-CDS" id="AAD48958"/>
    </conflict>
</comment>
<accession>Q9S9V0</accession>
<protein>
    <recommendedName>
        <fullName>Calcium-dependent protein kinase 31</fullName>
        <ecNumber>2.7.11.1</ecNumber>
    </recommendedName>
</protein>
<feature type="initiator methionine" description="Removed" evidence="3">
    <location>
        <position position="1"/>
    </location>
</feature>
<feature type="chain" id="PRO_0000363352" description="Calcium-dependent protein kinase 31">
    <location>
        <begin position="2"/>
        <end position="484"/>
    </location>
</feature>
<feature type="domain" description="Protein kinase" evidence="4">
    <location>
        <begin position="28"/>
        <end position="290"/>
    </location>
</feature>
<feature type="domain" description="EF-hand 1" evidence="5">
    <location>
        <begin position="332"/>
        <end position="367"/>
    </location>
</feature>
<feature type="domain" description="EF-hand 2" evidence="5">
    <location>
        <begin position="368"/>
        <end position="403"/>
    </location>
</feature>
<feature type="domain" description="EF-hand 3" evidence="5">
    <location>
        <begin position="404"/>
        <end position="439"/>
    </location>
</feature>
<feature type="domain" description="EF-hand 4" evidence="5">
    <location>
        <begin position="444"/>
        <end position="474"/>
    </location>
</feature>
<feature type="region of interest" description="Autoinhibitory domain" evidence="1">
    <location>
        <begin position="295"/>
        <end position="325"/>
    </location>
</feature>
<feature type="active site" description="Proton acceptor" evidence="4">
    <location>
        <position position="156"/>
    </location>
</feature>
<feature type="binding site" evidence="4">
    <location>
        <begin position="34"/>
        <end position="42"/>
    </location>
    <ligand>
        <name>ATP</name>
        <dbReference type="ChEBI" id="CHEBI:30616"/>
    </ligand>
</feature>
<feature type="binding site" evidence="4">
    <location>
        <position position="57"/>
    </location>
    <ligand>
        <name>ATP</name>
        <dbReference type="ChEBI" id="CHEBI:30616"/>
    </ligand>
</feature>
<feature type="binding site" evidence="5">
    <location>
        <position position="345"/>
    </location>
    <ligand>
        <name>Ca(2+)</name>
        <dbReference type="ChEBI" id="CHEBI:29108"/>
        <label>1</label>
    </ligand>
</feature>
<feature type="binding site" evidence="5">
    <location>
        <position position="347"/>
    </location>
    <ligand>
        <name>Ca(2+)</name>
        <dbReference type="ChEBI" id="CHEBI:29108"/>
        <label>1</label>
    </ligand>
</feature>
<feature type="binding site" evidence="5">
    <location>
        <position position="349"/>
    </location>
    <ligand>
        <name>Ca(2+)</name>
        <dbReference type="ChEBI" id="CHEBI:29108"/>
        <label>1</label>
    </ligand>
</feature>
<feature type="binding site" evidence="5">
    <location>
        <position position="351"/>
    </location>
    <ligand>
        <name>Ca(2+)</name>
        <dbReference type="ChEBI" id="CHEBI:29108"/>
        <label>1</label>
    </ligand>
</feature>
<feature type="binding site" evidence="5">
    <location>
        <position position="356"/>
    </location>
    <ligand>
        <name>Ca(2+)</name>
        <dbReference type="ChEBI" id="CHEBI:29108"/>
        <label>1</label>
    </ligand>
</feature>
<feature type="binding site" evidence="5">
    <location>
        <position position="381"/>
    </location>
    <ligand>
        <name>Ca(2+)</name>
        <dbReference type="ChEBI" id="CHEBI:29108"/>
        <label>2</label>
    </ligand>
</feature>
<feature type="binding site" evidence="5">
    <location>
        <position position="383"/>
    </location>
    <ligand>
        <name>Ca(2+)</name>
        <dbReference type="ChEBI" id="CHEBI:29108"/>
        <label>2</label>
    </ligand>
</feature>
<feature type="binding site" evidence="5">
    <location>
        <position position="385"/>
    </location>
    <ligand>
        <name>Ca(2+)</name>
        <dbReference type="ChEBI" id="CHEBI:29108"/>
        <label>2</label>
    </ligand>
</feature>
<feature type="binding site" evidence="5">
    <location>
        <position position="387"/>
    </location>
    <ligand>
        <name>Ca(2+)</name>
        <dbReference type="ChEBI" id="CHEBI:29108"/>
        <label>2</label>
    </ligand>
</feature>
<feature type="binding site" evidence="5">
    <location>
        <position position="392"/>
    </location>
    <ligand>
        <name>Ca(2+)</name>
        <dbReference type="ChEBI" id="CHEBI:29108"/>
        <label>2</label>
    </ligand>
</feature>
<feature type="binding site" evidence="5">
    <location>
        <position position="417"/>
    </location>
    <ligand>
        <name>Ca(2+)</name>
        <dbReference type="ChEBI" id="CHEBI:29108"/>
        <label>3</label>
    </ligand>
</feature>
<feature type="binding site" evidence="5">
    <location>
        <position position="419"/>
    </location>
    <ligand>
        <name>Ca(2+)</name>
        <dbReference type="ChEBI" id="CHEBI:29108"/>
        <label>3</label>
    </ligand>
</feature>
<feature type="binding site" evidence="5">
    <location>
        <position position="421"/>
    </location>
    <ligand>
        <name>Ca(2+)</name>
        <dbReference type="ChEBI" id="CHEBI:29108"/>
        <label>3</label>
    </ligand>
</feature>
<feature type="binding site" evidence="5">
    <location>
        <position position="423"/>
    </location>
    <ligand>
        <name>Ca(2+)</name>
        <dbReference type="ChEBI" id="CHEBI:29108"/>
        <label>3</label>
    </ligand>
</feature>
<feature type="binding site" evidence="5">
    <location>
        <position position="428"/>
    </location>
    <ligand>
        <name>Ca(2+)</name>
        <dbReference type="ChEBI" id="CHEBI:29108"/>
        <label>3</label>
    </ligand>
</feature>
<feature type="binding site" evidence="5">
    <location>
        <position position="452"/>
    </location>
    <ligand>
        <name>Ca(2+)</name>
        <dbReference type="ChEBI" id="CHEBI:29108"/>
        <label>4</label>
    </ligand>
</feature>
<feature type="binding site" evidence="5">
    <location>
        <position position="454"/>
    </location>
    <ligand>
        <name>Ca(2+)</name>
        <dbReference type="ChEBI" id="CHEBI:29108"/>
        <label>4</label>
    </ligand>
</feature>
<feature type="binding site" evidence="5">
    <location>
        <position position="456"/>
    </location>
    <ligand>
        <name>Ca(2+)</name>
        <dbReference type="ChEBI" id="CHEBI:29108"/>
        <label>4</label>
    </ligand>
</feature>
<feature type="binding site" evidence="5">
    <location>
        <position position="458"/>
    </location>
    <ligand>
        <name>Ca(2+)</name>
        <dbReference type="ChEBI" id="CHEBI:29108"/>
        <label>4</label>
    </ligand>
</feature>
<feature type="binding site" evidence="5">
    <location>
        <position position="463"/>
    </location>
    <ligand>
        <name>Ca(2+)</name>
        <dbReference type="ChEBI" id="CHEBI:29108"/>
        <label>4</label>
    </ligand>
</feature>
<feature type="modified residue" description="Phosphoserine" evidence="2">
    <location>
        <position position="196"/>
    </location>
</feature>
<feature type="lipid moiety-binding region" description="N-myristoyl glycine" evidence="3">
    <location>
        <position position="2"/>
    </location>
</feature>
<name>CDPKV_ARATH</name>
<sequence length="484" mass="54697">MGCYSSKNLKQSKRTILEKPFVDIGKVYILGDELGQGQFGITRKCVEKTSGKTYACKTILKTNLKSREDEEAVKREIRIMKHLSGEPNIVEFKKAYEDRDSVHIVMEYCGGGELFKKIEALSKDGKSYSEKEAVEIIRPIVNVVKNCHYMGVMLRDLKPENFLLSSTDKNATVKAIDFGCSVFIEEGEVHRKFAGSAYYIAPEVLQGKYGKEADIWSAGIILYILLCGKPPFVTEPEAQMFSEIKSAKIDVDSESWKFIDVKAKHLVNRMLNRNPKERISAAEVLGHPWMKDGEASDKPIDGVVLSRLKQFRDMNKLKKVALKVIAANLSEEEIKGLKTLFTNIDTDKSGTITLEELKTGLTRLGSNLSKTEVEQLMEAADVDGNGTIDIDEFISATMHRYRLDRDDHVYQAFQHFDKDNDGHITKEELEMAMKEHGVGDEVSIKQIITEVDTDNDGKINFEEFRTMMRSGSSLQPQRELLPIK</sequence>
<keyword id="KW-0067">ATP-binding</keyword>
<keyword id="KW-0106">Calcium</keyword>
<keyword id="KW-0418">Kinase</keyword>
<keyword id="KW-0449">Lipoprotein</keyword>
<keyword id="KW-0472">Membrane</keyword>
<keyword id="KW-0479">Metal-binding</keyword>
<keyword id="KW-0519">Myristate</keyword>
<keyword id="KW-0547">Nucleotide-binding</keyword>
<keyword id="KW-0597">Phosphoprotein</keyword>
<keyword id="KW-1185">Reference proteome</keyword>
<keyword id="KW-0677">Repeat</keyword>
<keyword id="KW-0723">Serine/threonine-protein kinase</keyword>
<keyword id="KW-0808">Transferase</keyword>
<proteinExistence type="evidence at transcript level"/>